<sequence length="622" mass="68790">MLKYDVIVIGGGHAGVEAAAASARLGVPTLLITLKPENLGEMSCNPAIGGIAKGTLVKEIDALDGLMGYVIDQAGIHYKMLNETRGPAVWGPRAQADRKLYKKAMYQILTNYPNLDILYGKVEDIEIKSSKIEAVILNNGSKILCQKIILTTGTFLSGLIHIGQKKIPAGRVDEEPSYGLSNTLKQIGFKLARLKTGTPPRIDGRTIDYSKTILQPGDKIPRPFSELTNIVNVSQINCFITKTTSETHDIIRENLDKSAMYSGQIEGIGPRYCPSIEDKIVRFSTKSEHRIFLEPEGLDDYTIYPNGISTSLPEDVQHKLIKTIPGLENVKVLRPGYAIEYDYVDPREISVTLETKKIAGLYLAGQINGTTGYEEAAGQGIIAGINAALAVKDQAPFMLTRANSYIGVMIDDLTTFGTIEPYRMFTSRSEYRLSLRADNSDLRLTELGMNIGVVSEKRKKIFTKKCEDIEKIKSLLNTLSLTTSKLAKMGIQVAQDGTYKTVLDLFKIPNFNVEQAIKIFPMLKETQNNNILQLLYIEAKYASYLTRQQADINLFQSEEAQFIPKNIDYFKIPSISLEIQEKLSAHKPTTIGVARRIPGITPAAITAIIIYLKTKYSDGSST</sequence>
<proteinExistence type="inferred from homology"/>
<name>MNMG_RICRO</name>
<accession>B0BW03</accession>
<organism>
    <name type="scientific">Rickettsia rickettsii (strain Iowa)</name>
    <dbReference type="NCBI Taxonomy" id="452659"/>
    <lineage>
        <taxon>Bacteria</taxon>
        <taxon>Pseudomonadati</taxon>
        <taxon>Pseudomonadota</taxon>
        <taxon>Alphaproteobacteria</taxon>
        <taxon>Rickettsiales</taxon>
        <taxon>Rickettsiaceae</taxon>
        <taxon>Rickettsieae</taxon>
        <taxon>Rickettsia</taxon>
        <taxon>spotted fever group</taxon>
    </lineage>
</organism>
<evidence type="ECO:0000255" key="1">
    <source>
        <dbReference type="HAMAP-Rule" id="MF_00129"/>
    </source>
</evidence>
<keyword id="KW-0963">Cytoplasm</keyword>
<keyword id="KW-0274">FAD</keyword>
<keyword id="KW-0285">Flavoprotein</keyword>
<keyword id="KW-0520">NAD</keyword>
<keyword id="KW-0819">tRNA processing</keyword>
<reference key="1">
    <citation type="journal article" date="2008" name="Infect. Immun.">
        <title>Genomic comparison of virulent Rickettsia rickettsii Sheila Smith and avirulent Rickettsia rickettsii Iowa.</title>
        <authorList>
            <person name="Ellison D.W."/>
            <person name="Clark T.R."/>
            <person name="Sturdevant D.E."/>
            <person name="Virtaneva K."/>
            <person name="Porcella S.F."/>
            <person name="Hackstadt T."/>
        </authorList>
    </citation>
    <scope>NUCLEOTIDE SEQUENCE [LARGE SCALE GENOMIC DNA]</scope>
    <source>
        <strain>Iowa</strain>
    </source>
</reference>
<comment type="function">
    <text evidence="1">NAD-binding protein involved in the addition of a carboxymethylaminomethyl (cmnm) group at the wobble position (U34) of certain tRNAs, forming tRNA-cmnm(5)s(2)U34.</text>
</comment>
<comment type="cofactor">
    <cofactor evidence="1">
        <name>FAD</name>
        <dbReference type="ChEBI" id="CHEBI:57692"/>
    </cofactor>
</comment>
<comment type="subunit">
    <text evidence="1">Homodimer. Heterotetramer of two MnmE and two MnmG subunits.</text>
</comment>
<comment type="subcellular location">
    <subcellularLocation>
        <location evidence="1">Cytoplasm</location>
    </subcellularLocation>
</comment>
<comment type="similarity">
    <text evidence="1">Belongs to the MnmG family.</text>
</comment>
<gene>
    <name evidence="1" type="primary">mnmG</name>
    <name evidence="1" type="synonym">gidA</name>
    <name type="ordered locus">RrIowa_0109</name>
</gene>
<feature type="chain" id="PRO_1000076327" description="tRNA uridine 5-carboxymethylaminomethyl modification enzyme MnmG">
    <location>
        <begin position="1"/>
        <end position="622"/>
    </location>
</feature>
<feature type="binding site" evidence="1">
    <location>
        <begin position="10"/>
        <end position="15"/>
    </location>
    <ligand>
        <name>FAD</name>
        <dbReference type="ChEBI" id="CHEBI:57692"/>
    </ligand>
</feature>
<feature type="binding site" evidence="1">
    <location>
        <position position="122"/>
    </location>
    <ligand>
        <name>FAD</name>
        <dbReference type="ChEBI" id="CHEBI:57692"/>
    </ligand>
</feature>
<feature type="binding site" evidence="1">
    <location>
        <position position="177"/>
    </location>
    <ligand>
        <name>FAD</name>
        <dbReference type="ChEBI" id="CHEBI:57692"/>
    </ligand>
</feature>
<feature type="binding site" evidence="1">
    <location>
        <begin position="269"/>
        <end position="283"/>
    </location>
    <ligand>
        <name>NAD(+)</name>
        <dbReference type="ChEBI" id="CHEBI:57540"/>
    </ligand>
</feature>
<feature type="binding site" evidence="1">
    <location>
        <position position="366"/>
    </location>
    <ligand>
        <name>FAD</name>
        <dbReference type="ChEBI" id="CHEBI:57692"/>
    </ligand>
</feature>
<protein>
    <recommendedName>
        <fullName evidence="1">tRNA uridine 5-carboxymethylaminomethyl modification enzyme MnmG</fullName>
    </recommendedName>
    <alternativeName>
        <fullName evidence="1">Glucose-inhibited division protein A</fullName>
    </alternativeName>
</protein>
<dbReference type="EMBL" id="CP000766">
    <property type="protein sequence ID" value="ABY72029.1"/>
    <property type="molecule type" value="Genomic_DNA"/>
</dbReference>
<dbReference type="RefSeq" id="WP_012150311.1">
    <property type="nucleotide sequence ID" value="NC_010263.3"/>
</dbReference>
<dbReference type="SMR" id="B0BW03"/>
<dbReference type="GeneID" id="79936885"/>
<dbReference type="KEGG" id="rrj:RrIowa_0109"/>
<dbReference type="eggNOG" id="COG0445">
    <property type="taxonomic scope" value="Bacteria"/>
</dbReference>
<dbReference type="HOGENOM" id="CLU_007831_2_2_5"/>
<dbReference type="Proteomes" id="UP000000796">
    <property type="component" value="Chromosome"/>
</dbReference>
<dbReference type="GO" id="GO:0005829">
    <property type="term" value="C:cytosol"/>
    <property type="evidence" value="ECO:0007669"/>
    <property type="project" value="TreeGrafter"/>
</dbReference>
<dbReference type="GO" id="GO:0050660">
    <property type="term" value="F:flavin adenine dinucleotide binding"/>
    <property type="evidence" value="ECO:0007669"/>
    <property type="project" value="UniProtKB-UniRule"/>
</dbReference>
<dbReference type="GO" id="GO:0030488">
    <property type="term" value="P:tRNA methylation"/>
    <property type="evidence" value="ECO:0007669"/>
    <property type="project" value="TreeGrafter"/>
</dbReference>
<dbReference type="GO" id="GO:0002098">
    <property type="term" value="P:tRNA wobble uridine modification"/>
    <property type="evidence" value="ECO:0007669"/>
    <property type="project" value="InterPro"/>
</dbReference>
<dbReference type="FunFam" id="3.50.50.60:FF:000082">
    <property type="entry name" value="protein MTO1 homolog, mitochondrial isoform X1"/>
    <property type="match status" value="1"/>
</dbReference>
<dbReference type="FunFam" id="1.10.150.570:FF:000001">
    <property type="entry name" value="tRNA uridine 5-carboxymethylaminomethyl modification enzyme MnmG"/>
    <property type="match status" value="1"/>
</dbReference>
<dbReference type="FunFam" id="3.50.50.60:FF:000002">
    <property type="entry name" value="tRNA uridine 5-carboxymethylaminomethyl modification enzyme MnmG"/>
    <property type="match status" value="1"/>
</dbReference>
<dbReference type="Gene3D" id="3.50.50.60">
    <property type="entry name" value="FAD/NAD(P)-binding domain"/>
    <property type="match status" value="2"/>
</dbReference>
<dbReference type="Gene3D" id="1.10.150.570">
    <property type="entry name" value="GidA associated domain, C-terminal subdomain"/>
    <property type="match status" value="1"/>
</dbReference>
<dbReference type="Gene3D" id="1.10.10.1800">
    <property type="entry name" value="tRNA uridine 5-carboxymethylaminomethyl modification enzyme MnmG/GidA"/>
    <property type="match status" value="1"/>
</dbReference>
<dbReference type="HAMAP" id="MF_00129">
    <property type="entry name" value="MnmG_GidA"/>
    <property type="match status" value="1"/>
</dbReference>
<dbReference type="InterPro" id="IPR036188">
    <property type="entry name" value="FAD/NAD-bd_sf"/>
</dbReference>
<dbReference type="InterPro" id="IPR049312">
    <property type="entry name" value="GIDA_C_N"/>
</dbReference>
<dbReference type="InterPro" id="IPR004416">
    <property type="entry name" value="MnmG"/>
</dbReference>
<dbReference type="InterPro" id="IPR002218">
    <property type="entry name" value="MnmG-rel"/>
</dbReference>
<dbReference type="InterPro" id="IPR020595">
    <property type="entry name" value="MnmG-rel_CS"/>
</dbReference>
<dbReference type="InterPro" id="IPR026904">
    <property type="entry name" value="MnmG_C"/>
</dbReference>
<dbReference type="InterPro" id="IPR047001">
    <property type="entry name" value="MnmG_C_subdom"/>
</dbReference>
<dbReference type="InterPro" id="IPR044920">
    <property type="entry name" value="MnmG_C_subdom_sf"/>
</dbReference>
<dbReference type="InterPro" id="IPR040131">
    <property type="entry name" value="MnmG_N"/>
</dbReference>
<dbReference type="NCBIfam" id="TIGR00136">
    <property type="entry name" value="mnmG_gidA"/>
    <property type="match status" value="1"/>
</dbReference>
<dbReference type="PANTHER" id="PTHR11806">
    <property type="entry name" value="GLUCOSE INHIBITED DIVISION PROTEIN A"/>
    <property type="match status" value="1"/>
</dbReference>
<dbReference type="PANTHER" id="PTHR11806:SF0">
    <property type="entry name" value="PROTEIN MTO1 HOMOLOG, MITOCHONDRIAL"/>
    <property type="match status" value="1"/>
</dbReference>
<dbReference type="Pfam" id="PF01134">
    <property type="entry name" value="GIDA"/>
    <property type="match status" value="1"/>
</dbReference>
<dbReference type="Pfam" id="PF21680">
    <property type="entry name" value="GIDA_C_1st"/>
    <property type="match status" value="1"/>
</dbReference>
<dbReference type="Pfam" id="PF13932">
    <property type="entry name" value="SAM_GIDA_C"/>
    <property type="match status" value="1"/>
</dbReference>
<dbReference type="PRINTS" id="PR00411">
    <property type="entry name" value="PNDRDTASEI"/>
</dbReference>
<dbReference type="SMART" id="SM01228">
    <property type="entry name" value="GIDA_assoc_3"/>
    <property type="match status" value="1"/>
</dbReference>
<dbReference type="SUPFAM" id="SSF51905">
    <property type="entry name" value="FAD/NAD(P)-binding domain"/>
    <property type="match status" value="1"/>
</dbReference>
<dbReference type="PROSITE" id="PS01280">
    <property type="entry name" value="GIDA_1"/>
    <property type="match status" value="1"/>
</dbReference>
<dbReference type="PROSITE" id="PS01281">
    <property type="entry name" value="GIDA_2"/>
    <property type="match status" value="1"/>
</dbReference>